<dbReference type="EMBL" id="AF042778">
    <property type="protein sequence ID" value="AAB97758.1"/>
    <property type="molecule type" value="Genomic_DNA"/>
</dbReference>
<dbReference type="SMR" id="O46589"/>
<dbReference type="UniPathway" id="UPA00705"/>
<dbReference type="Proteomes" id="UP000504640">
    <property type="component" value="Unplaced"/>
</dbReference>
<dbReference type="GO" id="GO:0005743">
    <property type="term" value="C:mitochondrial inner membrane"/>
    <property type="evidence" value="ECO:0000250"/>
    <property type="project" value="UniProtKB"/>
</dbReference>
<dbReference type="GO" id="GO:0045277">
    <property type="term" value="C:respiratory chain complex IV"/>
    <property type="evidence" value="ECO:0007669"/>
    <property type="project" value="InterPro"/>
</dbReference>
<dbReference type="GO" id="GO:0006123">
    <property type="term" value="P:mitochondrial electron transport, cytochrome c to oxygen"/>
    <property type="evidence" value="ECO:0007669"/>
    <property type="project" value="InterPro"/>
</dbReference>
<dbReference type="FunFam" id="1.10.442.10:FF:000005">
    <property type="match status" value="1"/>
</dbReference>
<dbReference type="Gene3D" id="1.10.442.10">
    <property type="entry name" value="Cytochrome c oxidase subunit IV"/>
    <property type="match status" value="1"/>
</dbReference>
<dbReference type="InterPro" id="IPR004203">
    <property type="entry name" value="Cyt_c_oxidase_su4_fam"/>
</dbReference>
<dbReference type="InterPro" id="IPR036639">
    <property type="entry name" value="Cyt_c_oxidase_su4_sf"/>
</dbReference>
<dbReference type="PANTHER" id="PTHR10707:SF12">
    <property type="entry name" value="CYTOCHROME C OXIDASE SUBUNIT 4 ISOFORM 1, MITOCHONDRIAL"/>
    <property type="match status" value="1"/>
</dbReference>
<dbReference type="PANTHER" id="PTHR10707">
    <property type="entry name" value="CYTOCHROME C OXIDASE SUBUNIT IV"/>
    <property type="match status" value="1"/>
</dbReference>
<dbReference type="Pfam" id="PF02936">
    <property type="entry name" value="COX4"/>
    <property type="match status" value="1"/>
</dbReference>
<dbReference type="SUPFAM" id="SSF81406">
    <property type="entry name" value="Mitochondrial cytochrome c oxidase subunit IV"/>
    <property type="match status" value="1"/>
</dbReference>
<gene>
    <name type="primary">COX4I1</name>
    <name type="synonym">COX4</name>
</gene>
<evidence type="ECO:0000250" key="1">
    <source>
        <dbReference type="UniProtKB" id="P00423"/>
    </source>
</evidence>
<evidence type="ECO:0000250" key="2">
    <source>
        <dbReference type="UniProtKB" id="P00424"/>
    </source>
</evidence>
<evidence type="ECO:0000250" key="3">
    <source>
        <dbReference type="UniProtKB" id="P10888"/>
    </source>
</evidence>
<evidence type="ECO:0000250" key="4">
    <source>
        <dbReference type="UniProtKB" id="P13073"/>
    </source>
</evidence>
<evidence type="ECO:0000250" key="5">
    <source>
        <dbReference type="UniProtKB" id="P19783"/>
    </source>
</evidence>
<evidence type="ECO:0000256" key="6">
    <source>
        <dbReference type="SAM" id="MobiDB-lite"/>
    </source>
</evidence>
<evidence type="ECO:0000305" key="7"/>
<organism>
    <name type="scientific">Sapajus apella</name>
    <name type="common">Brown-capped capuchin</name>
    <name type="synonym">Cebus apella</name>
    <dbReference type="NCBI Taxonomy" id="9515"/>
    <lineage>
        <taxon>Eukaryota</taxon>
        <taxon>Metazoa</taxon>
        <taxon>Chordata</taxon>
        <taxon>Craniata</taxon>
        <taxon>Vertebrata</taxon>
        <taxon>Euteleostomi</taxon>
        <taxon>Mammalia</taxon>
        <taxon>Eutheria</taxon>
        <taxon>Euarchontoglires</taxon>
        <taxon>Primates</taxon>
        <taxon>Haplorrhini</taxon>
        <taxon>Platyrrhini</taxon>
        <taxon>Cebidae</taxon>
        <taxon>Cebinae</taxon>
        <taxon>Sapajus</taxon>
    </lineage>
</organism>
<protein>
    <recommendedName>
        <fullName>Cytochrome c oxidase subunit 4 isoform 1, mitochondrial</fullName>
    </recommendedName>
    <alternativeName>
        <fullName>Cytochrome c oxidase polypeptide IV</fullName>
    </alternativeName>
    <alternativeName>
        <fullName>Cytochrome c oxidase subunit IV isoform 1</fullName>
        <shortName>COX IV-1</shortName>
    </alternativeName>
</protein>
<reference key="1">
    <citation type="journal article" date="1997" name="J. Mol. Evol.">
        <title>Molecular evolution of cytochrome c oxidase subunit IV: evidence for positive selection in simian primates.</title>
        <authorList>
            <person name="Wu W."/>
            <person name="Goodman M."/>
            <person name="Lomax M.I."/>
            <person name="Grossman L.I."/>
        </authorList>
    </citation>
    <scope>NUCLEOTIDE SEQUENCE [GENOMIC DNA]</scope>
</reference>
<sequence>SVVKSEDYALPSYVDRRDYPLPDVAHVRHLSASQKALKEKEKASWSSLSMDEKVE</sequence>
<proteinExistence type="inferred from homology"/>
<feature type="chain" id="PRO_0000194073" description="Cytochrome c oxidase subunit 4 isoform 1, mitochondrial">
    <location>
        <begin position="1" status="less than"/>
        <end position="55" status="greater than"/>
    </location>
</feature>
<feature type="region of interest" description="Disordered" evidence="6">
    <location>
        <begin position="32"/>
        <end position="55"/>
    </location>
</feature>
<feature type="modified residue" description="N6-acetyllysine; alternate" evidence="5">
    <location>
        <position position="4"/>
    </location>
</feature>
<feature type="modified residue" description="N6-succinyllysine; alternate" evidence="5">
    <location>
        <position position="4"/>
    </location>
</feature>
<feature type="modified residue" description="Phosphoserine" evidence="3">
    <location>
        <position position="31"/>
    </location>
</feature>
<feature type="modified residue" description="Phosphoserine" evidence="3">
    <location>
        <position position="33"/>
    </location>
</feature>
<feature type="modified residue" description="N6-acetyllysine; alternate" evidence="4">
    <location>
        <position position="35"/>
    </location>
</feature>
<feature type="modified residue" description="N6-succinyllysine; alternate" evidence="5">
    <location>
        <position position="35"/>
    </location>
</feature>
<feature type="modified residue" description="N6-acetyllysine" evidence="5">
    <location>
        <position position="42"/>
    </location>
</feature>
<feature type="non-terminal residue">
    <location>
        <position position="1"/>
    </location>
</feature>
<feature type="non-terminal residue">
    <location>
        <position position="55"/>
    </location>
</feature>
<accession>O46589</accession>
<keyword id="KW-0007">Acetylation</keyword>
<keyword id="KW-0472">Membrane</keyword>
<keyword id="KW-0496">Mitochondrion</keyword>
<keyword id="KW-0999">Mitochondrion inner membrane</keyword>
<keyword id="KW-0597">Phosphoprotein</keyword>
<keyword id="KW-1185">Reference proteome</keyword>
<keyword id="KW-0812">Transmembrane</keyword>
<keyword id="KW-1133">Transmembrane helix</keyword>
<comment type="function">
    <text evidence="2">Component of the cytochrome c oxidase, the last enzyme in the mitochondrial electron transport chain which drives oxidative phosphorylation. The respiratory chain contains 3 multisubunit complexes succinate dehydrogenase (complex II, CII), ubiquinol-cytochrome c oxidoreductase (cytochrome b-c1 complex, complex III, CIII) and cytochrome c oxidase (complex IV, CIV), that cooperate to transfer electrons derived from NADH and succinate to molecular oxygen, creating an electrochemical gradient over the inner membrane that drives transmembrane transport and the ATP synthase. Cytochrome c oxidase is the component of the respiratory chain that catalyzes the reduction of oxygen to water. Electrons originating from reduced cytochrome c in the intermembrane space (IMS) are transferred via the dinuclear copper A center (CU(A)) of subunit 2 and heme A of subunit 1 to the active site in subunit 1, a binuclear center (BNC) formed by heme A3 and copper B (CU(B)). The BNC reduces molecular oxygen to 2 water molecules using 4 electrons from cytochrome c in the IMS and 4 protons from the mitochondrial matrix.</text>
</comment>
<comment type="pathway">
    <text evidence="2">Energy metabolism; oxidative phosphorylation.</text>
</comment>
<comment type="subunit">
    <text evidence="1 3 4 5">Component of the cytochrome c oxidase (complex IV, CIV), a multisubunit enzyme composed of 14 subunits. The complex is composed of a catalytic core of 3 subunits MT-CO1, MT-CO2 and MT-CO3, encoded in the mitochondrial DNA, and 11 supernumerary subunits COX4I, COX5A, COX5B, COX6A, COX6B, COX6C, COX7A, COX7B, COX7C, COX8 and NDUFA4, which are encoded in the nuclear genome. The complex exists as a monomer or a dimer and forms supercomplexes (SCs) in the inner mitochondrial membrane with NADH-ubiquinone oxidoreductase (complex I, CI) and ubiquinol-cytochrome c oxidoreductase (cytochrome b-c1 complex, complex III, CIII), resulting in different assemblies (supercomplex SCI(1)III(2)IV(1) and megacomplex MCI(2)III(2)IV(2)) (By similarity). Interacts with PHB2; the interaction decreases in absence of SPHK2 (By similarity). Interacts with AFG1L (By similarity). Interacts with ABCB7; this interaction allows the regulation of cellular iron homeostasis and cellular reactive oxygen species (ROS) levels in cardiomyocytes (By similarity). Interacts with FLVCR2; this interaction occurs in the absence of heme and is disrupted upon heme binding. Interacts with IRGC (By similarity).</text>
</comment>
<comment type="subcellular location">
    <subcellularLocation>
        <location evidence="1">Mitochondrion inner membrane</location>
        <topology evidence="1">Single-pass membrane protein</topology>
    </subcellularLocation>
</comment>
<comment type="similarity">
    <text evidence="7">Belongs to the cytochrome c oxidase IV family.</text>
</comment>
<name>COX41_SAPAP</name>